<comment type="catalytic activity">
    <reaction evidence="1">
        <text>tRNA(Cys) + L-cysteine + ATP = L-cysteinyl-tRNA(Cys) + AMP + diphosphate</text>
        <dbReference type="Rhea" id="RHEA:17773"/>
        <dbReference type="Rhea" id="RHEA-COMP:9661"/>
        <dbReference type="Rhea" id="RHEA-COMP:9679"/>
        <dbReference type="ChEBI" id="CHEBI:30616"/>
        <dbReference type="ChEBI" id="CHEBI:33019"/>
        <dbReference type="ChEBI" id="CHEBI:35235"/>
        <dbReference type="ChEBI" id="CHEBI:78442"/>
        <dbReference type="ChEBI" id="CHEBI:78517"/>
        <dbReference type="ChEBI" id="CHEBI:456215"/>
        <dbReference type="EC" id="6.1.1.16"/>
    </reaction>
</comment>
<comment type="cofactor">
    <cofactor evidence="1">
        <name>Zn(2+)</name>
        <dbReference type="ChEBI" id="CHEBI:29105"/>
    </cofactor>
    <text evidence="1">Binds 1 zinc ion per subunit.</text>
</comment>
<comment type="subunit">
    <text evidence="1">Monomer.</text>
</comment>
<comment type="subcellular location">
    <subcellularLocation>
        <location evidence="1">Cytoplasm</location>
    </subcellularLocation>
</comment>
<comment type="similarity">
    <text evidence="1">Belongs to the class-I aminoacyl-tRNA synthetase family.</text>
</comment>
<reference key="1">
    <citation type="journal article" date="2008" name="J. Bacteriol.">
        <title>Genome sequence of Lactobacillus helveticus: an organism distinguished by selective gene loss and IS element expansion.</title>
        <authorList>
            <person name="Callanan M."/>
            <person name="Kaleta P."/>
            <person name="O'Callaghan J."/>
            <person name="O'Sullivan O."/>
            <person name="Jordan K."/>
            <person name="McAuliffe O."/>
            <person name="Sangrador-Vegas A."/>
            <person name="Slattery L."/>
            <person name="Fitzgerald G.F."/>
            <person name="Beresford T."/>
            <person name="Ross R.P."/>
        </authorList>
    </citation>
    <scope>NUCLEOTIDE SEQUENCE [LARGE SCALE GENOMIC DNA]</scope>
    <source>
        <strain>DPC 4571</strain>
    </source>
</reference>
<evidence type="ECO:0000255" key="1">
    <source>
        <dbReference type="HAMAP-Rule" id="MF_00041"/>
    </source>
</evidence>
<organism>
    <name type="scientific">Lactobacillus helveticus (strain DPC 4571)</name>
    <dbReference type="NCBI Taxonomy" id="405566"/>
    <lineage>
        <taxon>Bacteria</taxon>
        <taxon>Bacillati</taxon>
        <taxon>Bacillota</taxon>
        <taxon>Bacilli</taxon>
        <taxon>Lactobacillales</taxon>
        <taxon>Lactobacillaceae</taxon>
        <taxon>Lactobacillus</taxon>
    </lineage>
</organism>
<accession>A8YTD3</accession>
<gene>
    <name evidence="1" type="primary">cysS</name>
    <name type="ordered locus">lhv_0370</name>
</gene>
<proteinExistence type="inferred from homology"/>
<feature type="chain" id="PRO_1000071073" description="Cysteine--tRNA ligase">
    <location>
        <begin position="1"/>
        <end position="476"/>
    </location>
</feature>
<feature type="short sequence motif" description="'HIGH' region">
    <location>
        <begin position="32"/>
        <end position="42"/>
    </location>
</feature>
<feature type="short sequence motif" description="'KMSKS' region">
    <location>
        <begin position="274"/>
        <end position="278"/>
    </location>
</feature>
<feature type="binding site" evidence="1">
    <location>
        <position position="30"/>
    </location>
    <ligand>
        <name>Zn(2+)</name>
        <dbReference type="ChEBI" id="CHEBI:29105"/>
    </ligand>
</feature>
<feature type="binding site" evidence="1">
    <location>
        <position position="215"/>
    </location>
    <ligand>
        <name>Zn(2+)</name>
        <dbReference type="ChEBI" id="CHEBI:29105"/>
    </ligand>
</feature>
<feature type="binding site" evidence="1">
    <location>
        <position position="240"/>
    </location>
    <ligand>
        <name>Zn(2+)</name>
        <dbReference type="ChEBI" id="CHEBI:29105"/>
    </ligand>
</feature>
<feature type="binding site" evidence="1">
    <location>
        <position position="244"/>
    </location>
    <ligand>
        <name>Zn(2+)</name>
        <dbReference type="ChEBI" id="CHEBI:29105"/>
    </ligand>
</feature>
<feature type="binding site" evidence="1">
    <location>
        <position position="277"/>
    </location>
    <ligand>
        <name>ATP</name>
        <dbReference type="ChEBI" id="CHEBI:30616"/>
    </ligand>
</feature>
<name>SYC_LACH4</name>
<keyword id="KW-0030">Aminoacyl-tRNA synthetase</keyword>
<keyword id="KW-0067">ATP-binding</keyword>
<keyword id="KW-0963">Cytoplasm</keyword>
<keyword id="KW-0436">Ligase</keyword>
<keyword id="KW-0479">Metal-binding</keyword>
<keyword id="KW-0547">Nucleotide-binding</keyword>
<keyword id="KW-0648">Protein biosynthesis</keyword>
<keyword id="KW-0862">Zinc</keyword>
<sequence>MLAVKVYNTLTRKKEEFKPLVPGQISMYVCGPTVYNYIHIGNARSSIAFDTIRRYLEYKGYKVKYVSNFTDVDDKMINEAHAEETTVPKLAEKFINAFLEDTTALNIEPATLHPRATHEIKEIIAFIQTLIDKGYAYESHGDVYYRAKKFKHYGELSDQNIERLEEGASEHINDEEQNRKEDPIDFALWKAQKEPDEIAWDSPWGKGRPGWHIECSVMSTKYLGDTIDIHGGGQDLEFPHHENEIAQSEAKTGKKFVNYWLHNGFVTVGKDQEKMSKSLHNFVTVHDILKEVDPQVLRFFMASVQYRRQINYSAENLQQAATILDRFKNTLVNINYRLEDDTPSKDSDELAKAIAKTNEKFEVAMDDDFNVQNALTAIYDLLPIVNANANAEKADKKSLKLFKDKLSAWLLVFGIDTEKLCSQSAGSNDEIDQLVKKRDEARKKKDWATSDQIRDQLKEMGITIQDTPQGTRWTRD</sequence>
<dbReference type="EC" id="6.1.1.16" evidence="1"/>
<dbReference type="EMBL" id="CP000517">
    <property type="protein sequence ID" value="ABX26589.1"/>
    <property type="molecule type" value="Genomic_DNA"/>
</dbReference>
<dbReference type="RefSeq" id="WP_012211407.1">
    <property type="nucleotide sequence ID" value="NC_010080.1"/>
</dbReference>
<dbReference type="SMR" id="A8YTD3"/>
<dbReference type="KEGG" id="lhe:lhv_0370"/>
<dbReference type="eggNOG" id="COG0215">
    <property type="taxonomic scope" value="Bacteria"/>
</dbReference>
<dbReference type="HOGENOM" id="CLU_013528_0_1_9"/>
<dbReference type="Proteomes" id="UP000000790">
    <property type="component" value="Chromosome"/>
</dbReference>
<dbReference type="GO" id="GO:0005829">
    <property type="term" value="C:cytosol"/>
    <property type="evidence" value="ECO:0007669"/>
    <property type="project" value="TreeGrafter"/>
</dbReference>
<dbReference type="GO" id="GO:0005524">
    <property type="term" value="F:ATP binding"/>
    <property type="evidence" value="ECO:0007669"/>
    <property type="project" value="UniProtKB-UniRule"/>
</dbReference>
<dbReference type="GO" id="GO:0004817">
    <property type="term" value="F:cysteine-tRNA ligase activity"/>
    <property type="evidence" value="ECO:0007669"/>
    <property type="project" value="UniProtKB-UniRule"/>
</dbReference>
<dbReference type="GO" id="GO:0008270">
    <property type="term" value="F:zinc ion binding"/>
    <property type="evidence" value="ECO:0007669"/>
    <property type="project" value="UniProtKB-UniRule"/>
</dbReference>
<dbReference type="GO" id="GO:0006423">
    <property type="term" value="P:cysteinyl-tRNA aminoacylation"/>
    <property type="evidence" value="ECO:0007669"/>
    <property type="project" value="UniProtKB-UniRule"/>
</dbReference>
<dbReference type="CDD" id="cd00672">
    <property type="entry name" value="CysRS_core"/>
    <property type="match status" value="1"/>
</dbReference>
<dbReference type="FunFam" id="3.40.50.620:FF:000009">
    <property type="entry name" value="Cysteine--tRNA ligase"/>
    <property type="match status" value="1"/>
</dbReference>
<dbReference type="Gene3D" id="1.20.120.1910">
    <property type="entry name" value="Cysteine-tRNA ligase, C-terminal anti-codon recognition domain"/>
    <property type="match status" value="1"/>
</dbReference>
<dbReference type="Gene3D" id="3.40.50.620">
    <property type="entry name" value="HUPs"/>
    <property type="match status" value="1"/>
</dbReference>
<dbReference type="HAMAP" id="MF_00041">
    <property type="entry name" value="Cys_tRNA_synth"/>
    <property type="match status" value="1"/>
</dbReference>
<dbReference type="InterPro" id="IPR015803">
    <property type="entry name" value="Cys-tRNA-ligase"/>
</dbReference>
<dbReference type="InterPro" id="IPR015273">
    <property type="entry name" value="Cys-tRNA-synt_Ia_DALR"/>
</dbReference>
<dbReference type="InterPro" id="IPR024909">
    <property type="entry name" value="Cys-tRNA/MSH_ligase"/>
</dbReference>
<dbReference type="InterPro" id="IPR056411">
    <property type="entry name" value="CysS_C"/>
</dbReference>
<dbReference type="InterPro" id="IPR014729">
    <property type="entry name" value="Rossmann-like_a/b/a_fold"/>
</dbReference>
<dbReference type="InterPro" id="IPR032678">
    <property type="entry name" value="tRNA-synt_1_cat_dom"/>
</dbReference>
<dbReference type="InterPro" id="IPR009080">
    <property type="entry name" value="tRNAsynth_Ia_anticodon-bd"/>
</dbReference>
<dbReference type="NCBIfam" id="TIGR00435">
    <property type="entry name" value="cysS"/>
    <property type="match status" value="1"/>
</dbReference>
<dbReference type="PANTHER" id="PTHR10890:SF3">
    <property type="entry name" value="CYSTEINE--TRNA LIGASE, CYTOPLASMIC"/>
    <property type="match status" value="1"/>
</dbReference>
<dbReference type="PANTHER" id="PTHR10890">
    <property type="entry name" value="CYSTEINYL-TRNA SYNTHETASE"/>
    <property type="match status" value="1"/>
</dbReference>
<dbReference type="Pfam" id="PF23493">
    <property type="entry name" value="CysS_C"/>
    <property type="match status" value="1"/>
</dbReference>
<dbReference type="Pfam" id="PF09190">
    <property type="entry name" value="DALR_2"/>
    <property type="match status" value="1"/>
</dbReference>
<dbReference type="Pfam" id="PF01406">
    <property type="entry name" value="tRNA-synt_1e"/>
    <property type="match status" value="1"/>
</dbReference>
<dbReference type="PRINTS" id="PR00983">
    <property type="entry name" value="TRNASYNTHCYS"/>
</dbReference>
<dbReference type="SMART" id="SM00840">
    <property type="entry name" value="DALR_2"/>
    <property type="match status" value="1"/>
</dbReference>
<dbReference type="SUPFAM" id="SSF47323">
    <property type="entry name" value="Anticodon-binding domain of a subclass of class I aminoacyl-tRNA synthetases"/>
    <property type="match status" value="1"/>
</dbReference>
<dbReference type="SUPFAM" id="SSF52374">
    <property type="entry name" value="Nucleotidylyl transferase"/>
    <property type="match status" value="1"/>
</dbReference>
<protein>
    <recommendedName>
        <fullName evidence="1">Cysteine--tRNA ligase</fullName>
        <ecNumber evidence="1">6.1.1.16</ecNumber>
    </recommendedName>
    <alternativeName>
        <fullName evidence="1">Cysteinyl-tRNA synthetase</fullName>
        <shortName evidence="1">CysRS</shortName>
    </alternativeName>
</protein>